<accession>A2RDV9</accession>
<comment type="function">
    <text evidence="1">May play a role in DNA repair. It seems to be involved in an RecBC-independent recombinational process of DNA repair. It may act with RecF and RecO.</text>
</comment>
<comment type="similarity">
    <text evidence="1">Belongs to the RecR family.</text>
</comment>
<sequence length="198" mass="21696">MLYPTPIAKLIDSYSKLPGIGIKTATRLAFYTIGMSNEDVNDFAKNLLAAKRELTYCSICGNLTDDDPCHICTDTSRDQTTILVVEDAKDVSAMEKIQEYRGYYHVLHGLISPMNGMGPDDINLKSLITRLMDGKVSEVIVATNATADGEATSMYISRVLKPAGIKVTRLARGLAVGSDIEYADEVTLLRAIENRTEL</sequence>
<name>RECR_STRPG</name>
<reference key="1">
    <citation type="journal article" date="2007" name="J. Bacteriol.">
        <title>Complete genome of acute rheumatic fever-associated serotype M5 Streptococcus pyogenes strain Manfredo.</title>
        <authorList>
            <person name="Holden M.T.G."/>
            <person name="Scott A."/>
            <person name="Cherevach I."/>
            <person name="Chillingworth T."/>
            <person name="Churcher C."/>
            <person name="Cronin A."/>
            <person name="Dowd L."/>
            <person name="Feltwell T."/>
            <person name="Hamlin N."/>
            <person name="Holroyd S."/>
            <person name="Jagels K."/>
            <person name="Moule S."/>
            <person name="Mungall K."/>
            <person name="Quail M.A."/>
            <person name="Price C."/>
            <person name="Rabbinowitsch E."/>
            <person name="Sharp S."/>
            <person name="Skelton J."/>
            <person name="Whitehead S."/>
            <person name="Barrell B.G."/>
            <person name="Kehoe M."/>
            <person name="Parkhill J."/>
        </authorList>
    </citation>
    <scope>NUCLEOTIDE SEQUENCE [LARGE SCALE GENOMIC DNA]</scope>
    <source>
        <strain>Manfredo</strain>
    </source>
</reference>
<gene>
    <name evidence="1" type="primary">recR</name>
    <name type="ordered locus">SpyM50701</name>
</gene>
<protein>
    <recommendedName>
        <fullName evidence="1">Recombination protein RecR</fullName>
    </recommendedName>
</protein>
<keyword id="KW-0227">DNA damage</keyword>
<keyword id="KW-0233">DNA recombination</keyword>
<keyword id="KW-0234">DNA repair</keyword>
<keyword id="KW-0479">Metal-binding</keyword>
<keyword id="KW-0862">Zinc</keyword>
<keyword id="KW-0863">Zinc-finger</keyword>
<proteinExistence type="inferred from homology"/>
<organism>
    <name type="scientific">Streptococcus pyogenes serotype M5 (strain Manfredo)</name>
    <dbReference type="NCBI Taxonomy" id="160491"/>
    <lineage>
        <taxon>Bacteria</taxon>
        <taxon>Bacillati</taxon>
        <taxon>Bacillota</taxon>
        <taxon>Bacilli</taxon>
        <taxon>Lactobacillales</taxon>
        <taxon>Streptococcaceae</taxon>
        <taxon>Streptococcus</taxon>
    </lineage>
</organism>
<feature type="chain" id="PRO_1000001629" description="Recombination protein RecR">
    <location>
        <begin position="1"/>
        <end position="198"/>
    </location>
</feature>
<feature type="domain" description="Toprim" evidence="1">
    <location>
        <begin position="80"/>
        <end position="175"/>
    </location>
</feature>
<feature type="zinc finger region" description="C4-type" evidence="1">
    <location>
        <begin position="57"/>
        <end position="72"/>
    </location>
</feature>
<evidence type="ECO:0000255" key="1">
    <source>
        <dbReference type="HAMAP-Rule" id="MF_00017"/>
    </source>
</evidence>
<dbReference type="EMBL" id="AM295007">
    <property type="protein sequence ID" value="CAM30034.1"/>
    <property type="molecule type" value="Genomic_DNA"/>
</dbReference>
<dbReference type="RefSeq" id="WP_011888787.1">
    <property type="nucleotide sequence ID" value="NC_009332.1"/>
</dbReference>
<dbReference type="SMR" id="A2RDV9"/>
<dbReference type="KEGG" id="spf:SpyM50701"/>
<dbReference type="HOGENOM" id="CLU_060739_1_0_9"/>
<dbReference type="GO" id="GO:0003677">
    <property type="term" value="F:DNA binding"/>
    <property type="evidence" value="ECO:0007669"/>
    <property type="project" value="UniProtKB-UniRule"/>
</dbReference>
<dbReference type="GO" id="GO:0008270">
    <property type="term" value="F:zinc ion binding"/>
    <property type="evidence" value="ECO:0007669"/>
    <property type="project" value="UniProtKB-KW"/>
</dbReference>
<dbReference type="GO" id="GO:0006310">
    <property type="term" value="P:DNA recombination"/>
    <property type="evidence" value="ECO:0007669"/>
    <property type="project" value="UniProtKB-UniRule"/>
</dbReference>
<dbReference type="GO" id="GO:0006281">
    <property type="term" value="P:DNA repair"/>
    <property type="evidence" value="ECO:0007669"/>
    <property type="project" value="UniProtKB-UniRule"/>
</dbReference>
<dbReference type="CDD" id="cd01025">
    <property type="entry name" value="TOPRIM_recR"/>
    <property type="match status" value="1"/>
</dbReference>
<dbReference type="Gene3D" id="3.30.60.80">
    <property type="match status" value="1"/>
</dbReference>
<dbReference type="Gene3D" id="3.40.1360.10">
    <property type="match status" value="1"/>
</dbReference>
<dbReference type="Gene3D" id="6.10.250.240">
    <property type="match status" value="1"/>
</dbReference>
<dbReference type="Gene3D" id="1.10.8.420">
    <property type="entry name" value="RecR Domain 1"/>
    <property type="match status" value="1"/>
</dbReference>
<dbReference type="HAMAP" id="MF_00017">
    <property type="entry name" value="RecR"/>
    <property type="match status" value="1"/>
</dbReference>
<dbReference type="InterPro" id="IPR000093">
    <property type="entry name" value="DNA_Rcmb_RecR"/>
</dbReference>
<dbReference type="InterPro" id="IPR023627">
    <property type="entry name" value="Rcmb_RecR"/>
</dbReference>
<dbReference type="InterPro" id="IPR015967">
    <property type="entry name" value="Rcmb_RecR_Znf"/>
</dbReference>
<dbReference type="InterPro" id="IPR006171">
    <property type="entry name" value="TOPRIM_dom"/>
</dbReference>
<dbReference type="InterPro" id="IPR034137">
    <property type="entry name" value="TOPRIM_RecR"/>
</dbReference>
<dbReference type="NCBIfam" id="TIGR00615">
    <property type="entry name" value="recR"/>
    <property type="match status" value="1"/>
</dbReference>
<dbReference type="PANTHER" id="PTHR30446">
    <property type="entry name" value="RECOMBINATION PROTEIN RECR"/>
    <property type="match status" value="1"/>
</dbReference>
<dbReference type="PANTHER" id="PTHR30446:SF0">
    <property type="entry name" value="RECOMBINATION PROTEIN RECR"/>
    <property type="match status" value="1"/>
</dbReference>
<dbReference type="Pfam" id="PF21175">
    <property type="entry name" value="RecR_C"/>
    <property type="match status" value="1"/>
</dbReference>
<dbReference type="Pfam" id="PF21176">
    <property type="entry name" value="RecR_HhH"/>
    <property type="match status" value="1"/>
</dbReference>
<dbReference type="Pfam" id="PF02132">
    <property type="entry name" value="RecR_ZnF"/>
    <property type="match status" value="1"/>
</dbReference>
<dbReference type="Pfam" id="PF13662">
    <property type="entry name" value="Toprim_4"/>
    <property type="match status" value="1"/>
</dbReference>
<dbReference type="SMART" id="SM00493">
    <property type="entry name" value="TOPRIM"/>
    <property type="match status" value="1"/>
</dbReference>
<dbReference type="SUPFAM" id="SSF111304">
    <property type="entry name" value="Recombination protein RecR"/>
    <property type="match status" value="1"/>
</dbReference>
<dbReference type="PROSITE" id="PS01300">
    <property type="entry name" value="RECR"/>
    <property type="match status" value="1"/>
</dbReference>
<dbReference type="PROSITE" id="PS50880">
    <property type="entry name" value="TOPRIM"/>
    <property type="match status" value="1"/>
</dbReference>